<dbReference type="EMBL" id="AF098631">
    <property type="protein sequence ID" value="AAD12259.1"/>
    <property type="molecule type" value="Genomic_DNA"/>
</dbReference>
<dbReference type="EMBL" id="AL049730">
    <property type="status" value="NOT_ANNOTATED_CDS"/>
    <property type="molecule type" value="Genomic_DNA"/>
</dbReference>
<dbReference type="EMBL" id="CP002687">
    <property type="protein sequence ID" value="AEE83145.1"/>
    <property type="molecule type" value="Genomic_DNA"/>
</dbReference>
<dbReference type="EMBL" id="AK118720">
    <property type="protein sequence ID" value="BAC43314.1"/>
    <property type="molecule type" value="mRNA"/>
</dbReference>
<dbReference type="EMBL" id="BT024669">
    <property type="protein sequence ID" value="ABD57494.1"/>
    <property type="molecule type" value="mRNA"/>
</dbReference>
<dbReference type="RefSeq" id="NP_849366.1">
    <property type="nucleotide sequence ID" value="NM_179035.1"/>
</dbReference>
<dbReference type="SMR" id="Q9ZSP6"/>
<dbReference type="STRING" id="3702.Q9ZSP6"/>
<dbReference type="PaxDb" id="3702-AT4G12545.1"/>
<dbReference type="EnsemblPlants" id="AT4G12545.1">
    <property type="protein sequence ID" value="AT4G12545.1"/>
    <property type="gene ID" value="AT4G12545"/>
</dbReference>
<dbReference type="GeneID" id="826867"/>
<dbReference type="Gramene" id="AT4G12545.1">
    <property type="protein sequence ID" value="AT4G12545.1"/>
    <property type="gene ID" value="AT4G12545"/>
</dbReference>
<dbReference type="KEGG" id="ath:AT4G12545"/>
<dbReference type="Araport" id="AT4G12545"/>
<dbReference type="TAIR" id="AT4G12545"/>
<dbReference type="eggNOG" id="ENOG502RZES">
    <property type="taxonomic scope" value="Eukaryota"/>
</dbReference>
<dbReference type="HOGENOM" id="CLU_055715_1_2_1"/>
<dbReference type="InParanoid" id="Q9ZSP6"/>
<dbReference type="OMA" id="IQISTCA"/>
<dbReference type="PhylomeDB" id="Q9ZSP6"/>
<dbReference type="PRO" id="PR:Q9ZSP6"/>
<dbReference type="Proteomes" id="UP000006548">
    <property type="component" value="Chromosome 4"/>
</dbReference>
<dbReference type="ExpressionAtlas" id="Q9ZSP6">
    <property type="expression patterns" value="baseline and differential"/>
</dbReference>
<dbReference type="GO" id="GO:0005576">
    <property type="term" value="C:extracellular region"/>
    <property type="evidence" value="ECO:0007669"/>
    <property type="project" value="UniProtKB-SubCell"/>
</dbReference>
<dbReference type="CDD" id="cd01958">
    <property type="entry name" value="HPS_like"/>
    <property type="match status" value="1"/>
</dbReference>
<dbReference type="Gene3D" id="1.10.110.10">
    <property type="entry name" value="Plant lipid-transfer and hydrophobic proteins"/>
    <property type="match status" value="1"/>
</dbReference>
<dbReference type="InterPro" id="IPR036312">
    <property type="entry name" value="Bifun_inhib/LTP/seed_sf"/>
</dbReference>
<dbReference type="InterPro" id="IPR016140">
    <property type="entry name" value="Bifunc_inhib/LTP/seed_store"/>
</dbReference>
<dbReference type="InterPro" id="IPR027923">
    <property type="entry name" value="Hydrophob_seed_dom"/>
</dbReference>
<dbReference type="InterPro" id="IPR051636">
    <property type="entry name" value="Plant_LTP/defense-related"/>
</dbReference>
<dbReference type="PANTHER" id="PTHR31731">
    <property type="match status" value="1"/>
</dbReference>
<dbReference type="Pfam" id="PF14547">
    <property type="entry name" value="Hydrophob_seed"/>
    <property type="match status" value="1"/>
</dbReference>
<dbReference type="SMART" id="SM00499">
    <property type="entry name" value="AAI"/>
    <property type="match status" value="1"/>
</dbReference>
<dbReference type="SUPFAM" id="SSF47699">
    <property type="entry name" value="Bifunctional inhibitor/lipid-transfer protein/seed storage 2S albumin"/>
    <property type="match status" value="1"/>
</dbReference>
<feature type="signal peptide" evidence="2">
    <location>
        <begin position="1"/>
        <end position="23"/>
    </location>
</feature>
<feature type="chain" id="PRO_0000429359" description="Putative lipid-binding protein AIR1B">
    <location>
        <begin position="24"/>
        <end position="108"/>
    </location>
</feature>
<feature type="disulfide bond" evidence="2">
    <location>
        <begin position="28"/>
        <end position="55"/>
    </location>
</feature>
<feature type="disulfide bond" evidence="2">
    <location>
        <begin position="35"/>
        <end position="54"/>
    </location>
</feature>
<feature type="disulfide bond" evidence="2">
    <location>
        <begin position="71"/>
        <end position="107"/>
    </location>
</feature>
<organism>
    <name type="scientific">Arabidopsis thaliana</name>
    <name type="common">Mouse-ear cress</name>
    <dbReference type="NCBI Taxonomy" id="3702"/>
    <lineage>
        <taxon>Eukaryota</taxon>
        <taxon>Viridiplantae</taxon>
        <taxon>Streptophyta</taxon>
        <taxon>Embryophyta</taxon>
        <taxon>Tracheophyta</taxon>
        <taxon>Spermatophyta</taxon>
        <taxon>Magnoliopsida</taxon>
        <taxon>eudicotyledons</taxon>
        <taxon>Gunneridae</taxon>
        <taxon>Pentapetalae</taxon>
        <taxon>rosids</taxon>
        <taxon>malvids</taxon>
        <taxon>Brassicales</taxon>
        <taxon>Brassicaceae</taxon>
        <taxon>Camelineae</taxon>
        <taxon>Arabidopsis</taxon>
    </lineage>
</organism>
<reference key="1">
    <citation type="journal article" date="1999" name="Plant Mol. Biol.">
        <title>Isolation and characterization of cDNA clones corresponding with mRNAs that accumulate during auxin-induced lateral root formation.</title>
        <authorList>
            <person name="Neuteboom L.W."/>
            <person name="Ng J.M.Y."/>
            <person name="Kuyper M."/>
            <person name="Clijdesdale O.R."/>
            <person name="Hooykaas P.J.J."/>
            <person name="van der Zaal B.J."/>
        </authorList>
    </citation>
    <scope>NUCLEOTIDE SEQUENCE [GENOMIC DNA]</scope>
    <source>
        <strain>cv. Columbia</strain>
    </source>
</reference>
<reference key="2">
    <citation type="journal article" date="1999" name="Nature">
        <title>Sequence and analysis of chromosome 4 of the plant Arabidopsis thaliana.</title>
        <authorList>
            <person name="Mayer K.F.X."/>
            <person name="Schueller C."/>
            <person name="Wambutt R."/>
            <person name="Murphy G."/>
            <person name="Volckaert G."/>
            <person name="Pohl T."/>
            <person name="Duesterhoeft A."/>
            <person name="Stiekema W."/>
            <person name="Entian K.-D."/>
            <person name="Terryn N."/>
            <person name="Harris B."/>
            <person name="Ansorge W."/>
            <person name="Brandt P."/>
            <person name="Grivell L.A."/>
            <person name="Rieger M."/>
            <person name="Weichselgartner M."/>
            <person name="de Simone V."/>
            <person name="Obermaier B."/>
            <person name="Mache R."/>
            <person name="Mueller M."/>
            <person name="Kreis M."/>
            <person name="Delseny M."/>
            <person name="Puigdomenech P."/>
            <person name="Watson M."/>
            <person name="Schmidtheini T."/>
            <person name="Reichert B."/>
            <person name="Portetelle D."/>
            <person name="Perez-Alonso M."/>
            <person name="Boutry M."/>
            <person name="Bancroft I."/>
            <person name="Vos P."/>
            <person name="Hoheisel J."/>
            <person name="Zimmermann W."/>
            <person name="Wedler H."/>
            <person name="Ridley P."/>
            <person name="Langham S.-A."/>
            <person name="McCullagh B."/>
            <person name="Bilham L."/>
            <person name="Robben J."/>
            <person name="van der Schueren J."/>
            <person name="Grymonprez B."/>
            <person name="Chuang Y.-J."/>
            <person name="Vandenbussche F."/>
            <person name="Braeken M."/>
            <person name="Weltjens I."/>
            <person name="Voet M."/>
            <person name="Bastiaens I."/>
            <person name="Aert R."/>
            <person name="Defoor E."/>
            <person name="Weitzenegger T."/>
            <person name="Bothe G."/>
            <person name="Ramsperger U."/>
            <person name="Hilbert H."/>
            <person name="Braun M."/>
            <person name="Holzer E."/>
            <person name="Brandt A."/>
            <person name="Peters S."/>
            <person name="van Staveren M."/>
            <person name="Dirkse W."/>
            <person name="Mooijman P."/>
            <person name="Klein Lankhorst R."/>
            <person name="Rose M."/>
            <person name="Hauf J."/>
            <person name="Koetter P."/>
            <person name="Berneiser S."/>
            <person name="Hempel S."/>
            <person name="Feldpausch M."/>
            <person name="Lamberth S."/>
            <person name="Van den Daele H."/>
            <person name="De Keyser A."/>
            <person name="Buysshaert C."/>
            <person name="Gielen J."/>
            <person name="Villarroel R."/>
            <person name="De Clercq R."/>
            <person name="van Montagu M."/>
            <person name="Rogers J."/>
            <person name="Cronin A."/>
            <person name="Quail M.A."/>
            <person name="Bray-Allen S."/>
            <person name="Clark L."/>
            <person name="Doggett J."/>
            <person name="Hall S."/>
            <person name="Kay M."/>
            <person name="Lennard N."/>
            <person name="McLay K."/>
            <person name="Mayes R."/>
            <person name="Pettett A."/>
            <person name="Rajandream M.A."/>
            <person name="Lyne M."/>
            <person name="Benes V."/>
            <person name="Rechmann S."/>
            <person name="Borkova D."/>
            <person name="Bloecker H."/>
            <person name="Scharfe M."/>
            <person name="Grimm M."/>
            <person name="Loehnert T.-H."/>
            <person name="Dose S."/>
            <person name="de Haan M."/>
            <person name="Maarse A.C."/>
            <person name="Schaefer M."/>
            <person name="Mueller-Auer S."/>
            <person name="Gabel C."/>
            <person name="Fuchs M."/>
            <person name="Fartmann B."/>
            <person name="Granderath K."/>
            <person name="Dauner D."/>
            <person name="Herzl A."/>
            <person name="Neumann S."/>
            <person name="Argiriou A."/>
            <person name="Vitale D."/>
            <person name="Liguori R."/>
            <person name="Piravandi E."/>
            <person name="Massenet O."/>
            <person name="Quigley F."/>
            <person name="Clabauld G."/>
            <person name="Muendlein A."/>
            <person name="Felber R."/>
            <person name="Schnabl S."/>
            <person name="Hiller R."/>
            <person name="Schmidt W."/>
            <person name="Lecharny A."/>
            <person name="Aubourg S."/>
            <person name="Chefdor F."/>
            <person name="Cooke R."/>
            <person name="Berger C."/>
            <person name="Monfort A."/>
            <person name="Casacuberta E."/>
            <person name="Gibbons T."/>
            <person name="Weber N."/>
            <person name="Vandenbol M."/>
            <person name="Bargues M."/>
            <person name="Terol J."/>
            <person name="Torres A."/>
            <person name="Perez-Perez A."/>
            <person name="Purnelle B."/>
            <person name="Bent E."/>
            <person name="Johnson S."/>
            <person name="Tacon D."/>
            <person name="Jesse T."/>
            <person name="Heijnen L."/>
            <person name="Schwarz S."/>
            <person name="Scholler P."/>
            <person name="Heber S."/>
            <person name="Francs P."/>
            <person name="Bielke C."/>
            <person name="Frishman D."/>
            <person name="Haase D."/>
            <person name="Lemcke K."/>
            <person name="Mewes H.-W."/>
            <person name="Stocker S."/>
            <person name="Zaccaria P."/>
            <person name="Bevan M."/>
            <person name="Wilson R.K."/>
            <person name="de la Bastide M."/>
            <person name="Habermann K."/>
            <person name="Parnell L."/>
            <person name="Dedhia N."/>
            <person name="Gnoj L."/>
            <person name="Schutz K."/>
            <person name="Huang E."/>
            <person name="Spiegel L."/>
            <person name="Sekhon M."/>
            <person name="Murray J."/>
            <person name="Sheet P."/>
            <person name="Cordes M."/>
            <person name="Abu-Threideh J."/>
            <person name="Stoneking T."/>
            <person name="Kalicki J."/>
            <person name="Graves T."/>
            <person name="Harmon G."/>
            <person name="Edwards J."/>
            <person name="Latreille P."/>
            <person name="Courtney L."/>
            <person name="Cloud J."/>
            <person name="Abbott A."/>
            <person name="Scott K."/>
            <person name="Johnson D."/>
            <person name="Minx P."/>
            <person name="Bentley D."/>
            <person name="Fulton B."/>
            <person name="Miller N."/>
            <person name="Greco T."/>
            <person name="Kemp K."/>
            <person name="Kramer J."/>
            <person name="Fulton L."/>
            <person name="Mardis E."/>
            <person name="Dante M."/>
            <person name="Pepin K."/>
            <person name="Hillier L.W."/>
            <person name="Nelson J."/>
            <person name="Spieth J."/>
            <person name="Ryan E."/>
            <person name="Andrews S."/>
            <person name="Geisel C."/>
            <person name="Layman D."/>
            <person name="Du H."/>
            <person name="Ali J."/>
            <person name="Berghoff A."/>
            <person name="Jones K."/>
            <person name="Drone K."/>
            <person name="Cotton M."/>
            <person name="Joshu C."/>
            <person name="Antonoiu B."/>
            <person name="Zidanic M."/>
            <person name="Strong C."/>
            <person name="Sun H."/>
            <person name="Lamar B."/>
            <person name="Yordan C."/>
            <person name="Ma P."/>
            <person name="Zhong J."/>
            <person name="Preston R."/>
            <person name="Vil D."/>
            <person name="Shekher M."/>
            <person name="Matero A."/>
            <person name="Shah R."/>
            <person name="Swaby I.K."/>
            <person name="O'Shaughnessy A."/>
            <person name="Rodriguez M."/>
            <person name="Hoffman J."/>
            <person name="Till S."/>
            <person name="Granat S."/>
            <person name="Shohdy N."/>
            <person name="Hasegawa A."/>
            <person name="Hameed A."/>
            <person name="Lodhi M."/>
            <person name="Johnson A."/>
            <person name="Chen E."/>
            <person name="Marra M.A."/>
            <person name="Martienssen R."/>
            <person name="McCombie W.R."/>
        </authorList>
    </citation>
    <scope>NUCLEOTIDE SEQUENCE [LARGE SCALE GENOMIC DNA]</scope>
    <source>
        <strain>cv. Columbia</strain>
    </source>
</reference>
<reference key="3">
    <citation type="journal article" date="2017" name="Plant J.">
        <title>Araport11: a complete reannotation of the Arabidopsis thaliana reference genome.</title>
        <authorList>
            <person name="Cheng C.Y."/>
            <person name="Krishnakumar V."/>
            <person name="Chan A.P."/>
            <person name="Thibaud-Nissen F."/>
            <person name="Schobel S."/>
            <person name="Town C.D."/>
        </authorList>
    </citation>
    <scope>GENOME REANNOTATION</scope>
    <source>
        <strain>cv. Columbia</strain>
    </source>
</reference>
<reference key="4">
    <citation type="journal article" date="2002" name="Science">
        <title>Functional annotation of a full-length Arabidopsis cDNA collection.</title>
        <authorList>
            <person name="Seki M."/>
            <person name="Narusaka M."/>
            <person name="Kamiya A."/>
            <person name="Ishida J."/>
            <person name="Satou M."/>
            <person name="Sakurai T."/>
            <person name="Nakajima M."/>
            <person name="Enju A."/>
            <person name="Akiyama K."/>
            <person name="Oono Y."/>
            <person name="Muramatsu M."/>
            <person name="Hayashizaki Y."/>
            <person name="Kawai J."/>
            <person name="Carninci P."/>
            <person name="Itoh M."/>
            <person name="Ishii Y."/>
            <person name="Arakawa T."/>
            <person name="Shibata K."/>
            <person name="Shinagawa A."/>
            <person name="Shinozaki K."/>
        </authorList>
    </citation>
    <scope>NUCLEOTIDE SEQUENCE [LARGE SCALE MRNA]</scope>
    <source>
        <strain>cv. Columbia</strain>
    </source>
</reference>
<reference key="5">
    <citation type="submission" date="2006-02" db="EMBL/GenBank/DDBJ databases">
        <title>Arabidopsis ORF clones.</title>
        <authorList>
            <person name="Shinn P."/>
            <person name="Chen H."/>
            <person name="Kim C.J."/>
            <person name="Ecker J.R."/>
        </authorList>
    </citation>
    <scope>NUCLEOTIDE SEQUENCE [LARGE SCALE MRNA]</scope>
    <source>
        <strain>cv. Columbia</strain>
    </source>
</reference>
<sequence>MAPRTSLALFVSLNLLFFTCTSATTGTCPIQISTCANVLNLVDLTLGNPPVKPCCSLIQGLADLEAAACLCTALKASILGIVNINLPINLSVLLNVCSRNAPKGFQCA</sequence>
<keyword id="KW-1015">Disulfide bond</keyword>
<keyword id="KW-1185">Reference proteome</keyword>
<keyword id="KW-0964">Secreted</keyword>
<keyword id="KW-0732">Signal</keyword>
<proteinExistence type="inferred from homology"/>
<accession>Q9ZSP6</accession>
<protein>
    <recommendedName>
        <fullName>Putative lipid-binding protein AIR1B</fullName>
    </recommendedName>
</protein>
<comment type="subcellular location">
    <subcellularLocation>
        <location evidence="1">Secreted</location>
    </subcellularLocation>
</comment>
<comment type="similarity">
    <text evidence="3">Belongs to the plant LTP family. PEARLI1 subfamily.</text>
</comment>
<gene>
    <name type="primary">AIR1B</name>
    <name type="ordered locus">At4g12545</name>
    <name type="ORF">T1P17</name>
</gene>
<evidence type="ECO:0000250" key="1"/>
<evidence type="ECO:0000255" key="2"/>
<evidence type="ECO:0000305" key="3"/>
<name>AIR1L_ARATH</name>